<proteinExistence type="inferred from homology"/>
<feature type="chain" id="PRO_0000398084" description="Arginine biosynthesis bifunctional protein ArgJ alpha chain" evidence="1">
    <location>
        <begin position="1"/>
        <end position="208"/>
    </location>
</feature>
<feature type="chain" id="PRO_0000398085" description="Arginine biosynthesis bifunctional protein ArgJ beta chain" evidence="1">
    <location>
        <begin position="209"/>
        <end position="436"/>
    </location>
</feature>
<feature type="active site" description="Nucleophile" evidence="1">
    <location>
        <position position="209"/>
    </location>
</feature>
<feature type="binding site" evidence="1">
    <location>
        <position position="172"/>
    </location>
    <ligand>
        <name>substrate</name>
    </ligand>
</feature>
<feature type="binding site" evidence="1">
    <location>
        <position position="198"/>
    </location>
    <ligand>
        <name>substrate</name>
    </ligand>
</feature>
<feature type="binding site" evidence="1">
    <location>
        <position position="209"/>
    </location>
    <ligand>
        <name>substrate</name>
    </ligand>
</feature>
<feature type="binding site" evidence="1">
    <location>
        <position position="298"/>
    </location>
    <ligand>
        <name>substrate</name>
    </ligand>
</feature>
<feature type="binding site" evidence="1">
    <location>
        <position position="431"/>
    </location>
    <ligand>
        <name>substrate</name>
    </ligand>
</feature>
<feature type="binding site" evidence="1">
    <location>
        <position position="436"/>
    </location>
    <ligand>
        <name>substrate</name>
    </ligand>
</feature>
<feature type="site" description="Involved in the stabilization of negative charge on the oxyanion by the formation of the oxyanion hole" evidence="1">
    <location>
        <position position="133"/>
    </location>
</feature>
<feature type="site" description="Involved in the stabilization of negative charge on the oxyanion by the formation of the oxyanion hole" evidence="1">
    <location>
        <position position="134"/>
    </location>
</feature>
<feature type="site" description="Cleavage; by autolysis" evidence="1">
    <location>
        <begin position="208"/>
        <end position="209"/>
    </location>
</feature>
<reference key="1">
    <citation type="journal article" date="2009" name="Nature">
        <title>Evolution of pathogenicity and sexual reproduction in eight Candida genomes.</title>
        <authorList>
            <person name="Butler G."/>
            <person name="Rasmussen M.D."/>
            <person name="Lin M.F."/>
            <person name="Santos M.A.S."/>
            <person name="Sakthikumar S."/>
            <person name="Munro C.A."/>
            <person name="Rheinbay E."/>
            <person name="Grabherr M."/>
            <person name="Forche A."/>
            <person name="Reedy J.L."/>
            <person name="Agrafioti I."/>
            <person name="Arnaud M.B."/>
            <person name="Bates S."/>
            <person name="Brown A.J.P."/>
            <person name="Brunke S."/>
            <person name="Costanzo M.C."/>
            <person name="Fitzpatrick D.A."/>
            <person name="de Groot P.W.J."/>
            <person name="Harris D."/>
            <person name="Hoyer L.L."/>
            <person name="Hube B."/>
            <person name="Klis F.M."/>
            <person name="Kodira C."/>
            <person name="Lennard N."/>
            <person name="Logue M.E."/>
            <person name="Martin R."/>
            <person name="Neiman A.M."/>
            <person name="Nikolaou E."/>
            <person name="Quail M.A."/>
            <person name="Quinn J."/>
            <person name="Santos M.C."/>
            <person name="Schmitzberger F.F."/>
            <person name="Sherlock G."/>
            <person name="Shah P."/>
            <person name="Silverstein K.A.T."/>
            <person name="Skrzypek M.S."/>
            <person name="Soll D."/>
            <person name="Staggs R."/>
            <person name="Stansfield I."/>
            <person name="Stumpf M.P.H."/>
            <person name="Sudbery P.E."/>
            <person name="Srikantha T."/>
            <person name="Zeng Q."/>
            <person name="Berman J."/>
            <person name="Berriman M."/>
            <person name="Heitman J."/>
            <person name="Gow N.A.R."/>
            <person name="Lorenz M.C."/>
            <person name="Birren B.W."/>
            <person name="Kellis M."/>
            <person name="Cuomo C.A."/>
        </authorList>
    </citation>
    <scope>NUCLEOTIDE SEQUENCE [LARGE SCALE GENOMIC DNA]</scope>
    <source>
        <strain>ATCC 6260 / CBS 566 / DSM 6381 / JCM 1539 / NBRC 10279 / NRRL Y-324</strain>
    </source>
</reference>
<dbReference type="EC" id="2.3.1.35" evidence="1"/>
<dbReference type="EC" id="2.3.1.1" evidence="1"/>
<dbReference type="EMBL" id="CH408155">
    <property type="protein sequence ID" value="EDK36157.2"/>
    <property type="molecule type" value="Genomic_DNA"/>
</dbReference>
<dbReference type="RefSeq" id="XP_001486878.2">
    <property type="nucleotide sequence ID" value="XM_001486828.1"/>
</dbReference>
<dbReference type="SMR" id="A5DAF0"/>
<dbReference type="FunCoup" id="A5DAF0">
    <property type="interactions" value="303"/>
</dbReference>
<dbReference type="STRING" id="294746.A5DAF0"/>
<dbReference type="MEROPS" id="T05.001"/>
<dbReference type="GeneID" id="5129334"/>
<dbReference type="KEGG" id="pgu:PGUG_00255"/>
<dbReference type="VEuPathDB" id="FungiDB:PGUG_00255"/>
<dbReference type="eggNOG" id="KOG2786">
    <property type="taxonomic scope" value="Eukaryota"/>
</dbReference>
<dbReference type="HOGENOM" id="CLU_027172_1_0_1"/>
<dbReference type="InParanoid" id="A5DAF0"/>
<dbReference type="OMA" id="WGRIVMA"/>
<dbReference type="OrthoDB" id="2017946at2759"/>
<dbReference type="UniPathway" id="UPA00068">
    <property type="reaction ID" value="UER00106"/>
</dbReference>
<dbReference type="UniPathway" id="UPA00068">
    <property type="reaction ID" value="UER00111"/>
</dbReference>
<dbReference type="Proteomes" id="UP000001997">
    <property type="component" value="Unassembled WGS sequence"/>
</dbReference>
<dbReference type="GO" id="GO:0005759">
    <property type="term" value="C:mitochondrial matrix"/>
    <property type="evidence" value="ECO:0007669"/>
    <property type="project" value="UniProtKB-SubCell"/>
</dbReference>
<dbReference type="GO" id="GO:0004358">
    <property type="term" value="F:glutamate N-acetyltransferase activity"/>
    <property type="evidence" value="ECO:0007669"/>
    <property type="project" value="UniProtKB-UniRule"/>
</dbReference>
<dbReference type="GO" id="GO:0004042">
    <property type="term" value="F:L-glutamate N-acetyltransferase activity"/>
    <property type="evidence" value="ECO:0007669"/>
    <property type="project" value="UniProtKB-UniRule"/>
</dbReference>
<dbReference type="GO" id="GO:0006526">
    <property type="term" value="P:L-arginine biosynthetic process"/>
    <property type="evidence" value="ECO:0007669"/>
    <property type="project" value="UniProtKB-UniRule"/>
</dbReference>
<dbReference type="GO" id="GO:0006592">
    <property type="term" value="P:ornithine biosynthetic process"/>
    <property type="evidence" value="ECO:0007669"/>
    <property type="project" value="TreeGrafter"/>
</dbReference>
<dbReference type="CDD" id="cd02152">
    <property type="entry name" value="OAT"/>
    <property type="match status" value="1"/>
</dbReference>
<dbReference type="FunFam" id="3.60.70.12:FF:000001">
    <property type="entry name" value="Arginine biosynthesis bifunctional protein ArgJ, chloroplastic"/>
    <property type="match status" value="1"/>
</dbReference>
<dbReference type="FunFam" id="3.10.20.340:FF:000002">
    <property type="entry name" value="Arginine biosynthesis bifunctional protein ArgJ, mitochondrial"/>
    <property type="match status" value="1"/>
</dbReference>
<dbReference type="FunFam" id="3.30.2330.10:FF:000001">
    <property type="entry name" value="Arginine biosynthesis bifunctional protein ArgJ, mitochondrial"/>
    <property type="match status" value="1"/>
</dbReference>
<dbReference type="Gene3D" id="3.30.2330.10">
    <property type="entry name" value="arginine biosynthesis bifunctional protein suprefamily"/>
    <property type="match status" value="1"/>
</dbReference>
<dbReference type="Gene3D" id="3.10.20.340">
    <property type="entry name" value="ArgJ beta chain, C-terminal domain"/>
    <property type="match status" value="1"/>
</dbReference>
<dbReference type="Gene3D" id="3.60.70.12">
    <property type="entry name" value="L-amino peptidase D-ALA esterase/amidase"/>
    <property type="match status" value="1"/>
</dbReference>
<dbReference type="HAMAP" id="MF_01106">
    <property type="entry name" value="ArgJ"/>
    <property type="match status" value="1"/>
</dbReference>
<dbReference type="InterPro" id="IPR002813">
    <property type="entry name" value="Arg_biosynth_ArgJ"/>
</dbReference>
<dbReference type="InterPro" id="IPR016117">
    <property type="entry name" value="ArgJ-like_dom_sf"/>
</dbReference>
<dbReference type="InterPro" id="IPR042195">
    <property type="entry name" value="ArgJ_beta_C"/>
</dbReference>
<dbReference type="NCBIfam" id="TIGR00120">
    <property type="entry name" value="ArgJ"/>
    <property type="match status" value="1"/>
</dbReference>
<dbReference type="NCBIfam" id="NF003802">
    <property type="entry name" value="PRK05388.1"/>
    <property type="match status" value="1"/>
</dbReference>
<dbReference type="PANTHER" id="PTHR23100">
    <property type="entry name" value="ARGININE BIOSYNTHESIS BIFUNCTIONAL PROTEIN ARGJ"/>
    <property type="match status" value="1"/>
</dbReference>
<dbReference type="PANTHER" id="PTHR23100:SF0">
    <property type="entry name" value="ARGININE BIOSYNTHESIS BIFUNCTIONAL PROTEIN ARGJ, MITOCHONDRIAL"/>
    <property type="match status" value="1"/>
</dbReference>
<dbReference type="Pfam" id="PF01960">
    <property type="entry name" value="ArgJ"/>
    <property type="match status" value="1"/>
</dbReference>
<dbReference type="SUPFAM" id="SSF56266">
    <property type="entry name" value="DmpA/ArgJ-like"/>
    <property type="match status" value="1"/>
</dbReference>
<name>ARGJ_PICGU</name>
<evidence type="ECO:0000255" key="1">
    <source>
        <dbReference type="HAMAP-Rule" id="MF_03124"/>
    </source>
</evidence>
<accession>A5DAF0</accession>
<gene>
    <name type="ORF">PGUG_00255</name>
</gene>
<sequence>MVVNKGIRLLSTKAARFVPSGGVYPKGFVVGGIHCGVKKDGKSPDLAVLHNTFGQDANAAAVFTKNKFKAAPVQVSAATIKQKNGVGINSIIVNSGNANAVTGQKGMEDARAMAMVTDSVFGDHKDSTLVMSTGVIGNKLPIDNILSGIPKLESQVGDSHDHWLACANAICTTDTFPKLVSKSFEINGNTYTMAGVAKGAGMICPNMATLLGFFVTDAPVSAKALQQILSYATDRSFNSISVDGDMSTNDTIVAIANGAAGGDLIDNNSSCAESYFELQKEVTSFAQKLAQLVVRDGEGATKFITLKVKDALSYKDAKSIASSIANSSLFKTAMFGKDANWGRILCAIGYSDVSTAQSIIPDRTSVTFVPTDGSEPLPLLVDGEPESVDEARAAQILELEDLEIEIDLGTGGGQEAKFWTCDLSHEYVTINGDYRS</sequence>
<protein>
    <recommendedName>
        <fullName evidence="1">Arginine biosynthesis bifunctional protein ArgJ, mitochondrial</fullName>
    </recommendedName>
    <domain>
        <recommendedName>
            <fullName evidence="1">Glutamate N-acetyltransferase</fullName>
            <shortName evidence="1">GAT</shortName>
            <ecNumber evidence="1">2.3.1.35</ecNumber>
        </recommendedName>
        <alternativeName>
            <fullName evidence="1">Ornithine acetyltransferase</fullName>
            <shortName evidence="1">OATase</shortName>
        </alternativeName>
        <alternativeName>
            <fullName evidence="1">Ornithine transacetylase</fullName>
        </alternativeName>
    </domain>
    <domain>
        <recommendedName>
            <fullName evidence="1">Amino-acid acetyltransferase</fullName>
            <ecNumber evidence="1">2.3.1.1</ecNumber>
        </recommendedName>
        <alternativeName>
            <fullName evidence="1">N-acetylglutamate synthase</fullName>
            <shortName evidence="1">AGS</shortName>
        </alternativeName>
    </domain>
    <component>
        <recommendedName>
            <fullName evidence="1">Arginine biosynthesis bifunctional protein ArgJ alpha chain</fullName>
        </recommendedName>
    </component>
    <component>
        <recommendedName>
            <fullName evidence="1">Arginine biosynthesis bifunctional protein ArgJ beta chain</fullName>
        </recommendedName>
    </component>
</protein>
<keyword id="KW-0012">Acyltransferase</keyword>
<keyword id="KW-0028">Amino-acid biosynthesis</keyword>
<keyword id="KW-0055">Arginine biosynthesis</keyword>
<keyword id="KW-0068">Autocatalytic cleavage</keyword>
<keyword id="KW-0496">Mitochondrion</keyword>
<keyword id="KW-0511">Multifunctional enzyme</keyword>
<keyword id="KW-1185">Reference proteome</keyword>
<keyword id="KW-0808">Transferase</keyword>
<organism>
    <name type="scientific">Meyerozyma guilliermondii (strain ATCC 6260 / CBS 566 / DSM 6381 / JCM 1539 / NBRC 10279 / NRRL Y-324)</name>
    <name type="common">Yeast</name>
    <name type="synonym">Candida guilliermondii</name>
    <dbReference type="NCBI Taxonomy" id="294746"/>
    <lineage>
        <taxon>Eukaryota</taxon>
        <taxon>Fungi</taxon>
        <taxon>Dikarya</taxon>
        <taxon>Ascomycota</taxon>
        <taxon>Saccharomycotina</taxon>
        <taxon>Pichiomycetes</taxon>
        <taxon>Debaryomycetaceae</taxon>
        <taxon>Meyerozyma</taxon>
    </lineage>
</organism>
<comment type="function">
    <text evidence="1">Catalyzes two activities which are involved in the cyclic version of arginine biosynthesis: the synthesis of acetylglutamate from glutamate and acetyl-CoA, and of ornithine by transacetylation between acetylornithine and glutamate.</text>
</comment>
<comment type="catalytic activity">
    <reaction evidence="1">
        <text>N(2)-acetyl-L-ornithine + L-glutamate = N-acetyl-L-glutamate + L-ornithine</text>
        <dbReference type="Rhea" id="RHEA:15349"/>
        <dbReference type="ChEBI" id="CHEBI:29985"/>
        <dbReference type="ChEBI" id="CHEBI:44337"/>
        <dbReference type="ChEBI" id="CHEBI:46911"/>
        <dbReference type="ChEBI" id="CHEBI:57805"/>
        <dbReference type="EC" id="2.3.1.35"/>
    </reaction>
</comment>
<comment type="catalytic activity">
    <reaction evidence="1">
        <text>L-glutamate + acetyl-CoA = N-acetyl-L-glutamate + CoA + H(+)</text>
        <dbReference type="Rhea" id="RHEA:24292"/>
        <dbReference type="ChEBI" id="CHEBI:15378"/>
        <dbReference type="ChEBI" id="CHEBI:29985"/>
        <dbReference type="ChEBI" id="CHEBI:44337"/>
        <dbReference type="ChEBI" id="CHEBI:57287"/>
        <dbReference type="ChEBI" id="CHEBI:57288"/>
        <dbReference type="EC" id="2.3.1.1"/>
    </reaction>
</comment>
<comment type="pathway">
    <text evidence="1">Amino-acid biosynthesis; L-arginine biosynthesis; L-ornithine and N-acetyl-L-glutamate from L-glutamate and N(2)-acetyl-L-ornithine (cyclic): step 1/1.</text>
</comment>
<comment type="pathway">
    <text evidence="1">Amino-acid biosynthesis; L-arginine biosynthesis; N(2)-acetyl-L-ornithine from L-glutamate: step 1/4.</text>
</comment>
<comment type="subunit">
    <text evidence="1">Heterodimer of an alpha and a beta chain.</text>
</comment>
<comment type="subcellular location">
    <subcellularLocation>
        <location evidence="1">Mitochondrion matrix</location>
    </subcellularLocation>
</comment>
<comment type="PTM">
    <text evidence="1">The alpha and beta chains are autoproteolytically processed from a single precursor protein within the mitochondrion.</text>
</comment>
<comment type="miscellaneous">
    <text evidence="1">This protein may be expected to contain an N-terminal transit peptide but none has been predicted.</text>
</comment>
<comment type="similarity">
    <text evidence="1">Belongs to the ArgJ family.</text>
</comment>